<accession>A0A061FKL9</accession>
<gene>
    <name evidence="7" type="ORF">TCM_042578</name>
</gene>
<organism>
    <name type="scientific">Theobroma cacao</name>
    <name type="common">Cacao</name>
    <name type="synonym">Cocoa</name>
    <dbReference type="NCBI Taxonomy" id="3641"/>
    <lineage>
        <taxon>Eukaryota</taxon>
        <taxon>Viridiplantae</taxon>
        <taxon>Streptophyta</taxon>
        <taxon>Embryophyta</taxon>
        <taxon>Tracheophyta</taxon>
        <taxon>Spermatophyta</taxon>
        <taxon>Magnoliopsida</taxon>
        <taxon>eudicotyledons</taxon>
        <taxon>Gunneridae</taxon>
        <taxon>Pentapetalae</taxon>
        <taxon>rosids</taxon>
        <taxon>malvids</taxon>
        <taxon>Malvales</taxon>
        <taxon>Malvaceae</taxon>
        <taxon>Byttnerioideae</taxon>
        <taxon>Theobroma</taxon>
    </lineage>
</organism>
<protein>
    <recommendedName>
        <fullName evidence="6">Probable 7-methylxanthine methyltransferase 2</fullName>
        <ecNumber evidence="1">2.1.1.159</ecNumber>
    </recommendedName>
    <alternativeName>
        <fullName evidence="6">Theobromine synthase TCM_042578</fullName>
    </alternativeName>
</protein>
<comment type="function">
    <text evidence="1">Involved in the biosynthesis of theobromine.</text>
</comment>
<comment type="catalytic activity">
    <reaction evidence="1">
        <text>7-methylxanthine + S-adenosyl-L-methionine = theobromine + S-adenosyl-L-homocysteine + H(+)</text>
        <dbReference type="Rhea" id="RHEA:24604"/>
        <dbReference type="ChEBI" id="CHEBI:15378"/>
        <dbReference type="ChEBI" id="CHEBI:28946"/>
        <dbReference type="ChEBI" id="CHEBI:48991"/>
        <dbReference type="ChEBI" id="CHEBI:57856"/>
        <dbReference type="ChEBI" id="CHEBI:59789"/>
        <dbReference type="EC" id="2.1.1.159"/>
    </reaction>
    <physiologicalReaction direction="left-to-right" evidence="1">
        <dbReference type="Rhea" id="RHEA:24605"/>
    </physiologicalReaction>
</comment>
<comment type="cofactor">
    <cofactor evidence="4">
        <name>Mg(2+)</name>
        <dbReference type="ChEBI" id="CHEBI:18420"/>
    </cofactor>
    <text evidence="4">Binds 1 Mg(2+) ion per subunit.</text>
</comment>
<comment type="pathway">
    <text evidence="1">Alkaloid biosynthesis.</text>
</comment>
<comment type="similarity">
    <text evidence="6">Belongs to the methyltransferase superfamily. Type-7 methyltransferase family.</text>
</comment>
<evidence type="ECO:0000250" key="1">
    <source>
        <dbReference type="UniProtKB" id="A0A061FMF5"/>
    </source>
</evidence>
<evidence type="ECO:0000250" key="2">
    <source>
        <dbReference type="UniProtKB" id="A0A6C0WW36"/>
    </source>
</evidence>
<evidence type="ECO:0000250" key="3">
    <source>
        <dbReference type="UniProtKB" id="Q2HXI6"/>
    </source>
</evidence>
<evidence type="ECO:0000250" key="4">
    <source>
        <dbReference type="UniProtKB" id="Q9FLN8"/>
    </source>
</evidence>
<evidence type="ECO:0000250" key="5">
    <source>
        <dbReference type="UniProtKB" id="Q9FZN8"/>
    </source>
</evidence>
<evidence type="ECO:0000305" key="6"/>
<evidence type="ECO:0000312" key="7">
    <source>
        <dbReference type="EMBL" id="EOY17875.1"/>
    </source>
</evidence>
<dbReference type="EC" id="2.1.1.159" evidence="1"/>
<dbReference type="EMBL" id="CM001888">
    <property type="protein sequence ID" value="EOY17874.1"/>
    <property type="molecule type" value="Genomic_DNA"/>
</dbReference>
<dbReference type="EMBL" id="CM001888">
    <property type="protein sequence ID" value="EOY17875.1"/>
    <property type="molecule type" value="Genomic_DNA"/>
</dbReference>
<dbReference type="SMR" id="A0A061FKL9"/>
<dbReference type="EnsemblPlants" id="EOY17874">
    <property type="protein sequence ID" value="EOY17874"/>
    <property type="gene ID" value="TCM_042578"/>
</dbReference>
<dbReference type="EnsemblPlants" id="EOY17875">
    <property type="protein sequence ID" value="EOY17875"/>
    <property type="gene ID" value="TCM_042578"/>
</dbReference>
<dbReference type="Gramene" id="EOY17874">
    <property type="protein sequence ID" value="EOY17874"/>
    <property type="gene ID" value="TCM_042578"/>
</dbReference>
<dbReference type="Gramene" id="EOY17875">
    <property type="protein sequence ID" value="EOY17875"/>
    <property type="gene ID" value="TCM_042578"/>
</dbReference>
<dbReference type="eggNOG" id="ENOG502QQVK">
    <property type="taxonomic scope" value="Eukaryota"/>
</dbReference>
<dbReference type="HOGENOM" id="CLU_019628_2_0_1"/>
<dbReference type="InParanoid" id="A0A061FKL9"/>
<dbReference type="OMA" id="NNETHHQ"/>
<dbReference type="Proteomes" id="UP000026915">
    <property type="component" value="Chromosome 10"/>
</dbReference>
<dbReference type="Proteomes" id="UP000694886">
    <property type="component" value="Unplaced"/>
</dbReference>
<dbReference type="GO" id="GO:0046872">
    <property type="term" value="F:metal ion binding"/>
    <property type="evidence" value="ECO:0007669"/>
    <property type="project" value="UniProtKB-KW"/>
</dbReference>
<dbReference type="GO" id="GO:0008757">
    <property type="term" value="F:S-adenosylmethionine-dependent methyltransferase activity"/>
    <property type="evidence" value="ECO:0000318"/>
    <property type="project" value="GO_Central"/>
</dbReference>
<dbReference type="GO" id="GO:0032259">
    <property type="term" value="P:methylation"/>
    <property type="evidence" value="ECO:0000318"/>
    <property type="project" value="GO_Central"/>
</dbReference>
<dbReference type="Gene3D" id="1.10.1200.270">
    <property type="entry name" value="Methyltransferase, alpha-helical capping domain"/>
    <property type="match status" value="1"/>
</dbReference>
<dbReference type="Gene3D" id="3.40.50.150">
    <property type="entry name" value="Vaccinia Virus protein VP39"/>
    <property type="match status" value="1"/>
</dbReference>
<dbReference type="InterPro" id="IPR005299">
    <property type="entry name" value="MeTrfase_7"/>
</dbReference>
<dbReference type="InterPro" id="IPR042086">
    <property type="entry name" value="MeTrfase_capping"/>
</dbReference>
<dbReference type="InterPro" id="IPR029063">
    <property type="entry name" value="SAM-dependent_MTases_sf"/>
</dbReference>
<dbReference type="PANTHER" id="PTHR31009">
    <property type="entry name" value="S-ADENOSYL-L-METHIONINE:CARBOXYL METHYLTRANSFERASE FAMILY PROTEIN"/>
    <property type="match status" value="1"/>
</dbReference>
<dbReference type="Pfam" id="PF03492">
    <property type="entry name" value="Methyltransf_7"/>
    <property type="match status" value="1"/>
</dbReference>
<dbReference type="SUPFAM" id="SSF53335">
    <property type="entry name" value="S-adenosyl-L-methionine-dependent methyltransferases"/>
    <property type="match status" value="1"/>
</dbReference>
<name>BTS2_THECC</name>
<feature type="chain" id="PRO_0000451784" description="Probable 7-methylxanthine methyltransferase 2">
    <location>
        <begin position="1"/>
        <end position="367"/>
    </location>
</feature>
<feature type="binding site" evidence="2">
    <location>
        <position position="20"/>
    </location>
    <ligand>
        <name>S-adenosyl-L-homocysteine</name>
        <dbReference type="ChEBI" id="CHEBI:57856"/>
    </ligand>
</feature>
<feature type="binding site" evidence="2">
    <location>
        <position position="27"/>
    </location>
    <ligand>
        <name>theobromine</name>
        <dbReference type="ChEBI" id="CHEBI:28946"/>
    </ligand>
</feature>
<feature type="binding site" evidence="2">
    <location>
        <position position="64"/>
    </location>
    <ligand>
        <name>S-adenosyl-L-homocysteine</name>
        <dbReference type="ChEBI" id="CHEBI:57856"/>
    </ligand>
</feature>
<feature type="binding site" evidence="2">
    <location>
        <position position="69"/>
    </location>
    <ligand>
        <name>S-adenosyl-L-homocysteine</name>
        <dbReference type="ChEBI" id="CHEBI:57856"/>
    </ligand>
</feature>
<feature type="binding site" evidence="2">
    <location>
        <position position="101"/>
    </location>
    <ligand>
        <name>S-adenosyl-L-homocysteine</name>
        <dbReference type="ChEBI" id="CHEBI:57856"/>
    </ligand>
</feature>
<feature type="binding site" evidence="2">
    <location>
        <position position="102"/>
    </location>
    <ligand>
        <name>S-adenosyl-L-homocysteine</name>
        <dbReference type="ChEBI" id="CHEBI:57856"/>
    </ligand>
</feature>
<feature type="binding site" evidence="2">
    <location>
        <position position="134"/>
    </location>
    <ligand>
        <name>S-adenosyl-L-homocysteine</name>
        <dbReference type="ChEBI" id="CHEBI:57856"/>
    </ligand>
</feature>
<feature type="binding site" evidence="2">
    <location>
        <position position="135"/>
    </location>
    <ligand>
        <name>S-adenosyl-L-homocysteine</name>
        <dbReference type="ChEBI" id="CHEBI:57856"/>
    </ligand>
</feature>
<feature type="binding site" evidence="2">
    <location>
        <position position="152"/>
    </location>
    <ligand>
        <name>theobromine</name>
        <dbReference type="ChEBI" id="CHEBI:28946"/>
    </ligand>
</feature>
<feature type="binding site" evidence="2">
    <location>
        <position position="155"/>
    </location>
    <ligand>
        <name>theobromine</name>
        <dbReference type="ChEBI" id="CHEBI:28946"/>
    </ligand>
</feature>
<feature type="binding site" evidence="2">
    <location>
        <position position="156"/>
    </location>
    <ligand>
        <name>theobromine</name>
        <dbReference type="ChEBI" id="CHEBI:28946"/>
    </ligand>
</feature>
<feature type="binding site" evidence="4">
    <location>
        <position position="172"/>
    </location>
    <ligand>
        <name>Mg(2+)</name>
        <dbReference type="ChEBI" id="CHEBI:18420"/>
    </ligand>
</feature>
<feature type="binding site" evidence="4">
    <location>
        <position position="258"/>
    </location>
    <ligand>
        <name>Mg(2+)</name>
        <dbReference type="ChEBI" id="CHEBI:18420"/>
    </ligand>
</feature>
<feature type="binding site" evidence="4">
    <location>
        <position position="260"/>
    </location>
    <ligand>
        <name>Mg(2+)</name>
        <dbReference type="ChEBI" id="CHEBI:18420"/>
    </ligand>
</feature>
<feature type="binding site" evidence="4">
    <location>
        <position position="261"/>
    </location>
    <ligand>
        <name>Mg(2+)</name>
        <dbReference type="ChEBI" id="CHEBI:18420"/>
    </ligand>
</feature>
<feature type="binding site" evidence="2">
    <location>
        <position position="313"/>
    </location>
    <ligand>
        <name>theobromine</name>
        <dbReference type="ChEBI" id="CHEBI:28946"/>
    </ligand>
</feature>
<feature type="site" description="Involved in substrate discrimination" evidence="5">
    <location>
        <position position="149"/>
    </location>
</feature>
<feature type="site" description="Involved in substrate discrimination" evidence="3">
    <location>
        <position position="220"/>
    </location>
</feature>
<feature type="site" description="Involved in substrate discrimination" evidence="5">
    <location>
        <position position="264"/>
    </location>
</feature>
<feature type="site" description="Involved in substrate discrimination" evidence="5">
    <location>
        <position position="324"/>
    </location>
</feature>
<sequence>MAMKVKDIVFMNKGDGENSYVKSAGLTLKVIAKTQPIVQKAVQSLFTGTHSTPLQVVNVADLGCALGPQPLESMSIVIESIVEKCGELGCEMPEIQFHLNDLAGNDFNTLFKGLSVVQEKYKNVSWFAMGAPGSFHGRLFPRNSMHLVHSCYSVHWLSKAPKITSEAGLPLNKGKIYMSKTSPPAVREGYLSQFEEDFSSVLRFRSPELAPDGRMVLILNGRQSADPTEKDICYLWDLLAEALSYLVSEGLIDEEKLDSFNVPYYNPSQEEVERVIDKEGSFTTEFSDTVVLEIGGKNAWSDPGLRIKGYRCFSEPILSHQFGEEVMDKLFDKAEEILAEDYKQGKEATKNISIVVVLKKKTNQTWT</sequence>
<proteinExistence type="inferred from homology"/>
<reference key="1">
    <citation type="journal article" date="2013" name="Genome Biol.">
        <title>The genome sequence of the most widely cultivated cacao type and its use to identify candidate genes regulating pod color.</title>
        <authorList>
            <person name="Motamayor J.C."/>
            <person name="Mockaitis K."/>
            <person name="Schmutz J."/>
            <person name="Haiminen N."/>
            <person name="Livingstone D. III"/>
            <person name="Cornejo O."/>
            <person name="Findley S.D."/>
            <person name="Zheng P."/>
            <person name="Utro F."/>
            <person name="Royaert S."/>
            <person name="Saski C."/>
            <person name="Jenkins J."/>
            <person name="Podicheti R."/>
            <person name="Zhao M."/>
            <person name="Scheffler B.E."/>
            <person name="Stack J.C."/>
            <person name="Feltus F.A."/>
            <person name="Mustiga G.M."/>
            <person name="Amores F."/>
            <person name="Phillips W."/>
            <person name="Marelli J.P."/>
            <person name="May G.D."/>
            <person name="Shapiro H."/>
            <person name="Ma J."/>
            <person name="Bustamante C.D."/>
            <person name="Schnell R.J."/>
            <person name="Main D."/>
            <person name="Gilbert D."/>
            <person name="Parida L."/>
            <person name="Kuhn D.N."/>
        </authorList>
    </citation>
    <scope>NUCLEOTIDE SEQUENCE [LARGE SCALE GENOMIC DNA]</scope>
    <source>
        <strain>cv. Matina 1-6</strain>
    </source>
</reference>
<reference key="2">
    <citation type="journal article" date="2008" name="Phytochemistry">
        <title>Caffeine and related purine alkaloids: biosynthesis, catabolism, function and genetic engineering.</title>
        <authorList>
            <person name="Ashihara H."/>
            <person name="Sano H."/>
            <person name="Crozier A."/>
        </authorList>
    </citation>
    <scope>REVIEW ON CAFFEINE BIOSYNTHESIS</scope>
</reference>
<keyword id="KW-0460">Magnesium</keyword>
<keyword id="KW-0479">Metal-binding</keyword>
<keyword id="KW-0489">Methyltransferase</keyword>
<keyword id="KW-1185">Reference proteome</keyword>
<keyword id="KW-0808">Transferase</keyword>